<comment type="function">
    <text evidence="4 5 6 7">Involved in normal synaptic function through regulation of Ca(2+) influx and neurotransmitter release in photoreceptor synaptic terminals and in auditory transmission. Modulator of CACNA1D and CACNA1F, suppressing the calcium-dependent inactivation and shifting the activation range to more hyperpolarized voltages.</text>
</comment>
<comment type="subunit">
    <text evidence="4 6 7 9">Interacts with CACNA1F and CACNA1D (via IQ domain) in a calcium independent manner. Interacts (via N-terminus) with UNC119.</text>
</comment>
<comment type="subcellular location">
    <subcellularLocation>
        <location evidence="1">Cytoplasm</location>
    </subcellularLocation>
    <subcellularLocation>
        <location evidence="4">Presynapse</location>
    </subcellularLocation>
    <text evidence="4">Found in rod spherules and cone pedicles of the presynapses from both types of photoreceptors.</text>
</comment>
<comment type="tissue specificity">
    <text evidence="4 5 6 7">Expressed in retina and in the inner hair cells (IHC) of the cochlea.</text>
</comment>
<comment type="PTM">
    <text evidence="8">Phosphorylated. Phosphorylation levels change with the light conditions and regulate the activity, but has no effect on calcium binding.</text>
</comment>
<feature type="chain" id="PRO_0000073522" description="Calcium-binding protein 4">
    <location>
        <begin position="1"/>
        <end position="271"/>
    </location>
</feature>
<feature type="domain" description="EF-hand 1" evidence="2">
    <location>
        <begin position="125"/>
        <end position="160"/>
    </location>
</feature>
<feature type="domain" description="EF-hand 2" evidence="2">
    <location>
        <begin position="179"/>
        <end position="196"/>
    </location>
</feature>
<feature type="domain" description="EF-hand 3" evidence="2">
    <location>
        <begin position="202"/>
        <end position="237"/>
    </location>
</feature>
<feature type="domain" description="EF-hand 4" evidence="2">
    <location>
        <begin position="239"/>
        <end position="271"/>
    </location>
</feature>
<feature type="region of interest" description="Disordered" evidence="3">
    <location>
        <begin position="1"/>
        <end position="105"/>
    </location>
</feature>
<feature type="compositionally biased region" description="Low complexity" evidence="3">
    <location>
        <begin position="45"/>
        <end position="67"/>
    </location>
</feature>
<feature type="compositionally biased region" description="Basic residues" evidence="3">
    <location>
        <begin position="87"/>
        <end position="96"/>
    </location>
</feature>
<feature type="binding site" evidence="2">
    <location>
        <position position="138"/>
    </location>
    <ligand>
        <name>Ca(2+)</name>
        <dbReference type="ChEBI" id="CHEBI:29108"/>
        <label>1</label>
    </ligand>
</feature>
<feature type="binding site" evidence="2">
    <location>
        <position position="140"/>
    </location>
    <ligand>
        <name>Ca(2+)</name>
        <dbReference type="ChEBI" id="CHEBI:29108"/>
        <label>1</label>
    </ligand>
</feature>
<feature type="binding site" evidence="2">
    <location>
        <position position="142"/>
    </location>
    <ligand>
        <name>Ca(2+)</name>
        <dbReference type="ChEBI" id="CHEBI:29108"/>
        <label>1</label>
    </ligand>
</feature>
<feature type="binding site" evidence="2">
    <location>
        <position position="144"/>
    </location>
    <ligand>
        <name>Ca(2+)</name>
        <dbReference type="ChEBI" id="CHEBI:29108"/>
        <label>1</label>
    </ligand>
</feature>
<feature type="binding site" evidence="2">
    <location>
        <position position="149"/>
    </location>
    <ligand>
        <name>Ca(2+)</name>
        <dbReference type="ChEBI" id="CHEBI:29108"/>
        <label>1</label>
    </ligand>
</feature>
<feature type="binding site" evidence="2">
    <location>
        <position position="215"/>
    </location>
    <ligand>
        <name>Ca(2+)</name>
        <dbReference type="ChEBI" id="CHEBI:29108"/>
        <label>2</label>
    </ligand>
</feature>
<feature type="binding site" evidence="2">
    <location>
        <position position="217"/>
    </location>
    <ligand>
        <name>Ca(2+)</name>
        <dbReference type="ChEBI" id="CHEBI:29108"/>
        <label>2</label>
    </ligand>
</feature>
<feature type="binding site" evidence="2">
    <location>
        <position position="219"/>
    </location>
    <ligand>
        <name>Ca(2+)</name>
        <dbReference type="ChEBI" id="CHEBI:29108"/>
        <label>2</label>
    </ligand>
</feature>
<feature type="binding site" evidence="2">
    <location>
        <position position="221"/>
    </location>
    <ligand>
        <name>Ca(2+)</name>
        <dbReference type="ChEBI" id="CHEBI:29108"/>
        <label>2</label>
    </ligand>
</feature>
<feature type="binding site" evidence="2">
    <location>
        <position position="226"/>
    </location>
    <ligand>
        <name>Ca(2+)</name>
        <dbReference type="ChEBI" id="CHEBI:29108"/>
        <label>2</label>
    </ligand>
</feature>
<feature type="binding site" evidence="2">
    <location>
        <position position="252"/>
    </location>
    <ligand>
        <name>Ca(2+)</name>
        <dbReference type="ChEBI" id="CHEBI:29108"/>
        <label>3</label>
    </ligand>
</feature>
<feature type="binding site" evidence="2">
    <location>
        <position position="254"/>
    </location>
    <ligand>
        <name>Ca(2+)</name>
        <dbReference type="ChEBI" id="CHEBI:29108"/>
        <label>3</label>
    </ligand>
</feature>
<feature type="binding site" evidence="2">
    <location>
        <position position="256"/>
    </location>
    <ligand>
        <name>Ca(2+)</name>
        <dbReference type="ChEBI" id="CHEBI:29108"/>
        <label>3</label>
    </ligand>
</feature>
<feature type="binding site" evidence="2">
    <location>
        <position position="258"/>
    </location>
    <ligand>
        <name>Ca(2+)</name>
        <dbReference type="ChEBI" id="CHEBI:29108"/>
        <label>3</label>
    </ligand>
</feature>
<feature type="binding site" evidence="2">
    <location>
        <position position="263"/>
    </location>
    <ligand>
        <name>Ca(2+)</name>
        <dbReference type="ChEBI" id="CHEBI:29108"/>
        <label>3</label>
    </ligand>
</feature>
<feature type="modified residue" description="Phosphoserine; by PKC/PRKCZ" evidence="8">
    <location>
        <position position="37"/>
    </location>
</feature>
<feature type="mutagenesis site" description="Decreased phosphorylation." evidence="8">
    <original>S</original>
    <variation>A</variation>
    <location>
        <position position="37"/>
    </location>
</feature>
<feature type="mutagenesis site" description="No effect on phosphorylation." evidence="8">
    <original>S</original>
    <variation>A</variation>
    <location>
        <position position="46"/>
    </location>
</feature>
<feature type="mutagenesis site" description="No effect on phosphorylation." evidence="8">
    <original>SS</original>
    <variation>AA</variation>
    <location>
        <begin position="50"/>
        <end position="51"/>
    </location>
</feature>
<feature type="mutagenesis site" description="Loss of calcium binding; when associated with Q-226 and Q-263." evidence="8">
    <original>E</original>
    <variation>Q</variation>
    <location>
        <position position="149"/>
    </location>
</feature>
<feature type="mutagenesis site" description="No effect on phosphorylation." evidence="8">
    <original>T</original>
    <variation>A</variation>
    <location>
        <position position="223"/>
    </location>
</feature>
<feature type="mutagenesis site" description="Loss of calcium binding; when associated with Q-149 and Q-263." evidence="8">
    <original>E</original>
    <variation>Q</variation>
    <location>
        <position position="226"/>
    </location>
</feature>
<feature type="mutagenesis site" description="Loss of calcium binding; when associated with Q-149 and Q-226." evidence="8">
    <original>E</original>
    <variation>Q</variation>
    <location>
        <position position="263"/>
    </location>
</feature>
<feature type="helix" evidence="11">
    <location>
        <begin position="124"/>
        <end position="137"/>
    </location>
</feature>
<feature type="helix" evidence="11">
    <location>
        <begin position="148"/>
        <end position="150"/>
    </location>
</feature>
<feature type="helix" evidence="11">
    <location>
        <begin position="151"/>
        <end position="155"/>
    </location>
</feature>
<feature type="turn" evidence="11">
    <location>
        <begin position="156"/>
        <end position="158"/>
    </location>
</feature>
<feature type="helix" evidence="11">
    <location>
        <begin position="164"/>
        <end position="171"/>
    </location>
</feature>
<feature type="strand" evidence="11">
    <location>
        <begin position="174"/>
        <end position="177"/>
    </location>
</feature>
<feature type="helix" evidence="11">
    <location>
        <begin position="183"/>
        <end position="190"/>
    </location>
</feature>
<feature type="helix" evidence="10">
    <location>
        <begin position="204"/>
        <end position="214"/>
    </location>
</feature>
<feature type="helix" evidence="10">
    <location>
        <begin position="224"/>
        <end position="230"/>
    </location>
</feature>
<feature type="turn" evidence="10">
    <location>
        <begin position="233"/>
        <end position="235"/>
    </location>
</feature>
<feature type="helix" evidence="10">
    <location>
        <begin position="242"/>
        <end position="251"/>
    </location>
</feature>
<feature type="strand" evidence="10">
    <location>
        <begin position="256"/>
        <end position="259"/>
    </location>
</feature>
<feature type="helix" evidence="10">
    <location>
        <begin position="261"/>
        <end position="268"/>
    </location>
</feature>
<evidence type="ECO:0000250" key="1">
    <source>
        <dbReference type="UniProtKB" id="P57796"/>
    </source>
</evidence>
<evidence type="ECO:0000255" key="2">
    <source>
        <dbReference type="PROSITE-ProRule" id="PRU00448"/>
    </source>
</evidence>
<evidence type="ECO:0000256" key="3">
    <source>
        <dbReference type="SAM" id="MobiDB-lite"/>
    </source>
</evidence>
<evidence type="ECO:0000269" key="4">
    <source>
    </source>
</evidence>
<evidence type="ECO:0000269" key="5">
    <source>
    </source>
</evidence>
<evidence type="ECO:0000269" key="6">
    <source>
    </source>
</evidence>
<evidence type="ECO:0000269" key="7">
    <source>
    </source>
</evidence>
<evidence type="ECO:0000269" key="8">
    <source>
    </source>
</evidence>
<evidence type="ECO:0000269" key="9">
    <source>
    </source>
</evidence>
<evidence type="ECO:0007829" key="10">
    <source>
        <dbReference type="PDB" id="2M28"/>
    </source>
</evidence>
<evidence type="ECO:0007829" key="11">
    <source>
        <dbReference type="PDB" id="2M29"/>
    </source>
</evidence>
<dbReference type="EMBL" id="AY039218">
    <property type="protein sequence ID" value="AAK83463.1"/>
    <property type="molecule type" value="mRNA"/>
</dbReference>
<dbReference type="EMBL" id="BC049263">
    <property type="protein sequence ID" value="AAH49263.1"/>
    <property type="molecule type" value="mRNA"/>
</dbReference>
<dbReference type="CCDS" id="CCDS29416.1"/>
<dbReference type="RefSeq" id="NP_653115.1">
    <property type="nucleotide sequence ID" value="NM_144532.2"/>
</dbReference>
<dbReference type="PDB" id="2M28">
    <property type="method" value="NMR"/>
    <property type="chains" value="A=101-271"/>
</dbReference>
<dbReference type="PDB" id="2M29">
    <property type="method" value="NMR"/>
    <property type="chains" value="A=101-271"/>
</dbReference>
<dbReference type="PDBsum" id="2M28"/>
<dbReference type="PDBsum" id="2M29"/>
<dbReference type="BMRB" id="Q8VHC5"/>
<dbReference type="SMR" id="Q8VHC5"/>
<dbReference type="BioGRID" id="216173">
    <property type="interactions" value="1"/>
</dbReference>
<dbReference type="DIP" id="DIP-60739N"/>
<dbReference type="FunCoup" id="Q8VHC5">
    <property type="interactions" value="293"/>
</dbReference>
<dbReference type="IntAct" id="Q8VHC5">
    <property type="interactions" value="2"/>
</dbReference>
<dbReference type="STRING" id="10090.ENSMUSP00000025761"/>
<dbReference type="iPTMnet" id="Q8VHC5"/>
<dbReference type="PhosphoSitePlus" id="Q8VHC5"/>
<dbReference type="PaxDb" id="10090-ENSMUSP00000025761"/>
<dbReference type="ProteomicsDB" id="273817"/>
<dbReference type="Antibodypedia" id="30420">
    <property type="antibodies" value="226 antibodies from 26 providers"/>
</dbReference>
<dbReference type="DNASU" id="73660"/>
<dbReference type="Ensembl" id="ENSMUST00000025761.8">
    <property type="protein sequence ID" value="ENSMUSP00000025761.7"/>
    <property type="gene ID" value="ENSMUSG00000024842.9"/>
</dbReference>
<dbReference type="GeneID" id="73660"/>
<dbReference type="KEGG" id="mmu:73660"/>
<dbReference type="UCSC" id="uc008fyw.1">
    <property type="organism name" value="mouse"/>
</dbReference>
<dbReference type="AGR" id="MGI:1920910"/>
<dbReference type="CTD" id="57010"/>
<dbReference type="MGI" id="MGI:1920910">
    <property type="gene designation" value="Cabp4"/>
</dbReference>
<dbReference type="VEuPathDB" id="HostDB:ENSMUSG00000024842"/>
<dbReference type="eggNOG" id="KOG0027">
    <property type="taxonomic scope" value="Eukaryota"/>
</dbReference>
<dbReference type="GeneTree" id="ENSGT00940000161468"/>
<dbReference type="HOGENOM" id="CLU_061288_8_1_1"/>
<dbReference type="InParanoid" id="Q8VHC5"/>
<dbReference type="OMA" id="EQTPIQG"/>
<dbReference type="OrthoDB" id="26525at2759"/>
<dbReference type="PhylomeDB" id="Q8VHC5"/>
<dbReference type="TreeFam" id="TF334804"/>
<dbReference type="BioGRID-ORCS" id="73660">
    <property type="hits" value="2 hits in 78 CRISPR screens"/>
</dbReference>
<dbReference type="ChiTaRS" id="Cabp4">
    <property type="organism name" value="mouse"/>
</dbReference>
<dbReference type="EvolutionaryTrace" id="Q8VHC5"/>
<dbReference type="PRO" id="PR:Q8VHC5"/>
<dbReference type="Proteomes" id="UP000000589">
    <property type="component" value="Chromosome 19"/>
</dbReference>
<dbReference type="RNAct" id="Q8VHC5">
    <property type="molecule type" value="protein"/>
</dbReference>
<dbReference type="Bgee" id="ENSMUSG00000024842">
    <property type="expression patterns" value="Expressed in layer of retina and 52 other cell types or tissues"/>
</dbReference>
<dbReference type="GO" id="GO:0042995">
    <property type="term" value="C:cell projection"/>
    <property type="evidence" value="ECO:0007669"/>
    <property type="project" value="UniProtKB-KW"/>
</dbReference>
<dbReference type="GO" id="GO:0005829">
    <property type="term" value="C:cytosol"/>
    <property type="evidence" value="ECO:0000266"/>
    <property type="project" value="MGI"/>
</dbReference>
<dbReference type="GO" id="GO:0098793">
    <property type="term" value="C:presynapse"/>
    <property type="evidence" value="ECO:0007669"/>
    <property type="project" value="UniProtKB-SubCell"/>
</dbReference>
<dbReference type="GO" id="GO:0005509">
    <property type="term" value="F:calcium ion binding"/>
    <property type="evidence" value="ECO:0007669"/>
    <property type="project" value="InterPro"/>
</dbReference>
<dbReference type="GO" id="GO:0044325">
    <property type="term" value="F:transmembrane transporter binding"/>
    <property type="evidence" value="ECO:0007669"/>
    <property type="project" value="Ensembl"/>
</dbReference>
<dbReference type="GO" id="GO:0008594">
    <property type="term" value="P:photoreceptor cell morphogenesis"/>
    <property type="evidence" value="ECO:0000315"/>
    <property type="project" value="MGI"/>
</dbReference>
<dbReference type="GO" id="GO:0007602">
    <property type="term" value="P:phototransduction"/>
    <property type="evidence" value="ECO:0000315"/>
    <property type="project" value="MGI"/>
</dbReference>
<dbReference type="GO" id="GO:0060040">
    <property type="term" value="P:retinal bipolar neuron differentiation"/>
    <property type="evidence" value="ECO:0000315"/>
    <property type="project" value="MGI"/>
</dbReference>
<dbReference type="GO" id="GO:0046549">
    <property type="term" value="P:retinal cone cell development"/>
    <property type="evidence" value="ECO:0000315"/>
    <property type="project" value="MGI"/>
</dbReference>
<dbReference type="GO" id="GO:0007601">
    <property type="term" value="P:visual perception"/>
    <property type="evidence" value="ECO:0007669"/>
    <property type="project" value="Ensembl"/>
</dbReference>
<dbReference type="CDD" id="cd00051">
    <property type="entry name" value="EFh"/>
    <property type="match status" value="1"/>
</dbReference>
<dbReference type="DisProt" id="DP01592"/>
<dbReference type="FunFam" id="1.10.238.10:FF:000037">
    <property type="entry name" value="calcium-binding protein 1 isoform X2"/>
    <property type="match status" value="1"/>
</dbReference>
<dbReference type="FunFam" id="1.10.238.10:FF:000265">
    <property type="entry name" value="calcium-binding protein 4"/>
    <property type="match status" value="1"/>
</dbReference>
<dbReference type="Gene3D" id="1.10.238.10">
    <property type="entry name" value="EF-hand"/>
    <property type="match status" value="2"/>
</dbReference>
<dbReference type="InterPro" id="IPR043582">
    <property type="entry name" value="CaBP1/2/4/5"/>
</dbReference>
<dbReference type="InterPro" id="IPR011992">
    <property type="entry name" value="EF-hand-dom_pair"/>
</dbReference>
<dbReference type="InterPro" id="IPR018247">
    <property type="entry name" value="EF_Hand_1_Ca_BS"/>
</dbReference>
<dbReference type="InterPro" id="IPR002048">
    <property type="entry name" value="EF_hand_dom"/>
</dbReference>
<dbReference type="PANTHER" id="PTHR45917">
    <property type="entry name" value="CALCIUM-BINDING PROTEIN 1-RELATED"/>
    <property type="match status" value="1"/>
</dbReference>
<dbReference type="PANTHER" id="PTHR45917:SF4">
    <property type="entry name" value="CALCIUM-BINDING PROTEIN 4"/>
    <property type="match status" value="1"/>
</dbReference>
<dbReference type="Pfam" id="PF00036">
    <property type="entry name" value="EF-hand_1"/>
    <property type="match status" value="1"/>
</dbReference>
<dbReference type="Pfam" id="PF13499">
    <property type="entry name" value="EF-hand_7"/>
    <property type="match status" value="1"/>
</dbReference>
<dbReference type="SMART" id="SM00054">
    <property type="entry name" value="EFh"/>
    <property type="match status" value="3"/>
</dbReference>
<dbReference type="SUPFAM" id="SSF47473">
    <property type="entry name" value="EF-hand"/>
    <property type="match status" value="1"/>
</dbReference>
<dbReference type="PROSITE" id="PS00018">
    <property type="entry name" value="EF_HAND_1"/>
    <property type="match status" value="3"/>
</dbReference>
<dbReference type="PROSITE" id="PS50222">
    <property type="entry name" value="EF_HAND_2"/>
    <property type="match status" value="4"/>
</dbReference>
<gene>
    <name type="primary">Cabp4</name>
</gene>
<organism>
    <name type="scientific">Mus musculus</name>
    <name type="common">Mouse</name>
    <dbReference type="NCBI Taxonomy" id="10090"/>
    <lineage>
        <taxon>Eukaryota</taxon>
        <taxon>Metazoa</taxon>
        <taxon>Chordata</taxon>
        <taxon>Craniata</taxon>
        <taxon>Vertebrata</taxon>
        <taxon>Euteleostomi</taxon>
        <taxon>Mammalia</taxon>
        <taxon>Eutheria</taxon>
        <taxon>Euarchontoglires</taxon>
        <taxon>Glires</taxon>
        <taxon>Rodentia</taxon>
        <taxon>Myomorpha</taxon>
        <taxon>Muroidea</taxon>
        <taxon>Muridae</taxon>
        <taxon>Murinae</taxon>
        <taxon>Mus</taxon>
        <taxon>Mus</taxon>
    </lineage>
</organism>
<reference key="1">
    <citation type="journal article" date="2004" name="Nat. Neurosci.">
        <title>Essential role of Ca2+-binding protein 4, a Cav1.4 channel regulator, in photoreceptor synaptic function.</title>
        <authorList>
            <person name="Haeseleer F."/>
            <person name="Imanishi Y."/>
            <person name="Maeda T."/>
            <person name="Possin D.E."/>
            <person name="Maeda A."/>
            <person name="Lee A."/>
            <person name="Rieke F."/>
            <person name="Palczewski K."/>
        </authorList>
    </citation>
    <scope>NUCLEOTIDE SEQUENCE [MRNA]</scope>
    <scope>SUBCELLULAR LOCATION</scope>
    <scope>TISSUE SPECIFICITY</scope>
    <scope>INTERACTION WITH CACNA1F</scope>
    <scope>FUNCTION</scope>
    <source>
        <tissue>Retina</tissue>
    </source>
</reference>
<reference key="2">
    <citation type="journal article" date="2004" name="Genome Res.">
        <title>The status, quality, and expansion of the NIH full-length cDNA project: the Mammalian Gene Collection (MGC).</title>
        <authorList>
            <consortium name="The MGC Project Team"/>
        </authorList>
    </citation>
    <scope>NUCLEOTIDE SEQUENCE [LARGE SCALE MRNA]</scope>
    <source>
        <strain>C57BL/6J</strain>
        <tissue>Retina</tissue>
    </source>
</reference>
<reference key="3">
    <citation type="journal article" date="2005" name="Invest. Ophthalmol. Vis. Sci.">
        <title>A critical role of CaBP4 in the cone synapse.</title>
        <authorList>
            <person name="Maeda T."/>
            <person name="Lem J."/>
            <person name="Palczewski K."/>
            <person name="Haeseleer F."/>
        </authorList>
    </citation>
    <scope>FUNCTION</scope>
    <scope>TISSUE SPECIFICITY</scope>
</reference>
<reference key="4">
    <citation type="journal article" date="2006" name="J. Neurosci.">
        <title>Switching of Ca2+-dependent inactivation of Ca(v)1.3 channels by calcium binding proteins of auditory hair cells.</title>
        <authorList>
            <person name="Yang P.S."/>
            <person name="Alseikhan B.A."/>
            <person name="Hiel H."/>
            <person name="Grant L."/>
            <person name="Mori M.X."/>
            <person name="Yang W."/>
            <person name="Fuchs P.A."/>
            <person name="Yue D.T."/>
        </authorList>
    </citation>
    <scope>FUNCTION</scope>
    <scope>INTERACTION WITH CACNA1D</scope>
    <scope>TISSUE SPECIFICITY</scope>
</reference>
<reference key="5">
    <citation type="journal article" date="2007" name="J. Physiol. (Lond.)">
        <title>Ca2+-binding proteins tune Ca2+-feedback to Cav1.3 channels in mouse auditory hair cells.</title>
        <authorList>
            <person name="Cui G."/>
            <person name="Meyer A.C."/>
            <person name="Calin-Jageman I."/>
            <person name="Neef J."/>
            <person name="Haeseleer F."/>
            <person name="Moser T."/>
            <person name="Lee A."/>
        </authorList>
    </citation>
    <scope>FUNCTION</scope>
    <scope>INTERACTION WITH CACNA1D</scope>
    <scope>TISSUE SPECIFICITY</scope>
</reference>
<reference key="6">
    <citation type="journal article" date="2007" name="J. Neurosci.">
        <title>Phosphorylation of the Ca2+-binding protein CaBP4 by protein kinase C zeta in photoreceptors.</title>
        <authorList>
            <person name="Lee A."/>
            <person name="Jimenez A."/>
            <person name="Cui G."/>
            <person name="Haeseleer F."/>
        </authorList>
    </citation>
    <scope>PHOSPHORYLATION AT SER-37</scope>
    <scope>MUTAGENESIS OF SER-37; SER-46; 50-SER-SER-51; GLU-149; THR-223; GLU-226 AND GLU-263</scope>
</reference>
<reference key="7">
    <citation type="journal article" date="2008" name="Invest. Ophthalmol. Vis. Sci.">
        <title>Interaction and colocalization of CaBP4 and Unc119 (MRG4) in photoreceptors.</title>
        <authorList>
            <person name="Haeseleer F."/>
        </authorList>
    </citation>
    <scope>INTERACTION WITH UNC119</scope>
</reference>
<accession>Q8VHC5</accession>
<protein>
    <recommendedName>
        <fullName>Calcium-binding protein 4</fullName>
        <shortName>CaBP4</shortName>
    </recommendedName>
</protein>
<sequence length="271" mass="30268">MATEHNVQLVPGSQKIPKGVVSPRSAAEGPALTRRRSKKESWHPGSQKASSGDQSSSQGSEASGSSKHPPRTKVGQEEPSSAPARPASHRHSHRHRSDPQQDAAQRTYGPLLNRMFGKDRELGPEELEELQAAFEEFDTDQDGYIGYRELGDCMRTLGYMPTEMELLEVSQHVKMRMGGFVDFEEFVELISPKLREETAHMLGVRELRIAFREFDKDRDGRITVAELRQAAPALLGEPLEGTELDEMLREMDLNGDGTIDFDEFVMMLSTG</sequence>
<proteinExistence type="evidence at protein level"/>
<name>CABP4_MOUSE</name>
<keyword id="KW-0002">3D-structure</keyword>
<keyword id="KW-0106">Calcium</keyword>
<keyword id="KW-0966">Cell projection</keyword>
<keyword id="KW-0963">Cytoplasm</keyword>
<keyword id="KW-0479">Metal-binding</keyword>
<keyword id="KW-0597">Phosphoprotein</keyword>
<keyword id="KW-1185">Reference proteome</keyword>
<keyword id="KW-0677">Repeat</keyword>
<keyword id="KW-0770">Synapse</keyword>